<name>GSH1_ECO24</name>
<gene>
    <name evidence="1" type="primary">gshA</name>
    <name type="ordered locus">EcE24377A_2971</name>
</gene>
<proteinExistence type="inferred from homology"/>
<comment type="catalytic activity">
    <reaction evidence="1">
        <text>L-cysteine + L-glutamate + ATP = gamma-L-glutamyl-L-cysteine + ADP + phosphate + H(+)</text>
        <dbReference type="Rhea" id="RHEA:13285"/>
        <dbReference type="ChEBI" id="CHEBI:15378"/>
        <dbReference type="ChEBI" id="CHEBI:29985"/>
        <dbReference type="ChEBI" id="CHEBI:30616"/>
        <dbReference type="ChEBI" id="CHEBI:35235"/>
        <dbReference type="ChEBI" id="CHEBI:43474"/>
        <dbReference type="ChEBI" id="CHEBI:58173"/>
        <dbReference type="ChEBI" id="CHEBI:456216"/>
        <dbReference type="EC" id="6.3.2.2"/>
    </reaction>
</comment>
<comment type="pathway">
    <text evidence="1">Sulfur metabolism; glutathione biosynthesis; glutathione from L-cysteine and L-glutamate: step 1/2.</text>
</comment>
<comment type="similarity">
    <text evidence="1">Belongs to the glutamate--cysteine ligase type 1 family. Type 1 subfamily.</text>
</comment>
<organism>
    <name type="scientific">Escherichia coli O139:H28 (strain E24377A / ETEC)</name>
    <dbReference type="NCBI Taxonomy" id="331111"/>
    <lineage>
        <taxon>Bacteria</taxon>
        <taxon>Pseudomonadati</taxon>
        <taxon>Pseudomonadota</taxon>
        <taxon>Gammaproteobacteria</taxon>
        <taxon>Enterobacterales</taxon>
        <taxon>Enterobacteriaceae</taxon>
        <taxon>Escherichia</taxon>
    </lineage>
</organism>
<sequence length="518" mass="58285">MIPDVSQALAWLEKHPQALKGIQRGLERETLRVNADGTLATTGHPEALGSALTHKWITTDFAEALLEFITPVDGDIEHMLTFMRDLHRYTARNMGDERMWPLSMPCYIAEGQDIELAQYGTSNTGRFKTLYREGLKNRYGALMQTISGVHYNFSLPMAFWQAKCGDISGADAKEKISAGYFRVIRNYYRFGWVIPYLFGASPAICSSFLQGKPTSLPFEKTECGMYYLPYATSLRLSDLGYTNKSQSNLGITFNDLYEYVAGLKQAIKTPSEEYAKIGIEKDGKRLQINSNVLQIENELYAPIRPKRVTRSGESPSDALLRGGIEYIEVRSLDINPFSPIGVDEQQVRFLDLFMVWCALADAPEMSSSELACTRVNWNRVILEGRKPGLTLGIGCETAQFPLLQVGKDLFRDLKRVAQTLDSINGGEAYQKVCDELVACFDNPDLTFSARILRSMIDTGIGGTGKAFAEAYRNLLREEPLEILREEDFVAEREASERRQQEMEAADTEPFAVWLEKHA</sequence>
<keyword id="KW-0067">ATP-binding</keyword>
<keyword id="KW-0317">Glutathione biosynthesis</keyword>
<keyword id="KW-0436">Ligase</keyword>
<keyword id="KW-0547">Nucleotide-binding</keyword>
<keyword id="KW-1185">Reference proteome</keyword>
<dbReference type="EC" id="6.3.2.2" evidence="1"/>
<dbReference type="EMBL" id="CP000800">
    <property type="protein sequence ID" value="ABV16736.1"/>
    <property type="molecule type" value="Genomic_DNA"/>
</dbReference>
<dbReference type="RefSeq" id="WP_000611800.1">
    <property type="nucleotide sequence ID" value="NC_009801.1"/>
</dbReference>
<dbReference type="SMR" id="A7ZQC1"/>
<dbReference type="KEGG" id="ecw:EcE24377A_2971"/>
<dbReference type="HOGENOM" id="CLU_020728_3_0_6"/>
<dbReference type="UniPathway" id="UPA00142">
    <property type="reaction ID" value="UER00209"/>
</dbReference>
<dbReference type="Proteomes" id="UP000001122">
    <property type="component" value="Chromosome"/>
</dbReference>
<dbReference type="GO" id="GO:0005829">
    <property type="term" value="C:cytosol"/>
    <property type="evidence" value="ECO:0007669"/>
    <property type="project" value="TreeGrafter"/>
</dbReference>
<dbReference type="GO" id="GO:0005524">
    <property type="term" value="F:ATP binding"/>
    <property type="evidence" value="ECO:0007669"/>
    <property type="project" value="UniProtKB-KW"/>
</dbReference>
<dbReference type="GO" id="GO:0004357">
    <property type="term" value="F:glutamate-cysteine ligase activity"/>
    <property type="evidence" value="ECO:0007669"/>
    <property type="project" value="UniProtKB-UniRule"/>
</dbReference>
<dbReference type="GO" id="GO:0046872">
    <property type="term" value="F:metal ion binding"/>
    <property type="evidence" value="ECO:0007669"/>
    <property type="project" value="TreeGrafter"/>
</dbReference>
<dbReference type="GO" id="GO:0006750">
    <property type="term" value="P:glutathione biosynthetic process"/>
    <property type="evidence" value="ECO:0007669"/>
    <property type="project" value="UniProtKB-UniRule"/>
</dbReference>
<dbReference type="FunFam" id="3.30.590.20:FF:000001">
    <property type="entry name" value="Glutamate--cysteine ligase"/>
    <property type="match status" value="1"/>
</dbReference>
<dbReference type="Gene3D" id="3.30.590.20">
    <property type="match status" value="1"/>
</dbReference>
<dbReference type="HAMAP" id="MF_00578">
    <property type="entry name" value="Glu_cys_ligase"/>
    <property type="match status" value="1"/>
</dbReference>
<dbReference type="InterPro" id="IPR014746">
    <property type="entry name" value="Gln_synth/guanido_kin_cat_dom"/>
</dbReference>
<dbReference type="InterPro" id="IPR007370">
    <property type="entry name" value="Glu_cys_ligase"/>
</dbReference>
<dbReference type="InterPro" id="IPR006334">
    <property type="entry name" value="Glut_cys_ligase"/>
</dbReference>
<dbReference type="NCBIfam" id="TIGR01434">
    <property type="entry name" value="glu_cys_ligase"/>
    <property type="match status" value="1"/>
</dbReference>
<dbReference type="PANTHER" id="PTHR38761">
    <property type="entry name" value="GLUTAMATE--CYSTEINE LIGASE"/>
    <property type="match status" value="1"/>
</dbReference>
<dbReference type="PANTHER" id="PTHR38761:SF1">
    <property type="entry name" value="GLUTAMATE--CYSTEINE LIGASE"/>
    <property type="match status" value="1"/>
</dbReference>
<dbReference type="Pfam" id="PF04262">
    <property type="entry name" value="Glu_cys_ligase"/>
    <property type="match status" value="1"/>
</dbReference>
<dbReference type="SUPFAM" id="SSF55931">
    <property type="entry name" value="Glutamine synthetase/guanido kinase"/>
    <property type="match status" value="1"/>
</dbReference>
<evidence type="ECO:0000255" key="1">
    <source>
        <dbReference type="HAMAP-Rule" id="MF_00578"/>
    </source>
</evidence>
<reference key="1">
    <citation type="journal article" date="2008" name="J. Bacteriol.">
        <title>The pangenome structure of Escherichia coli: comparative genomic analysis of E. coli commensal and pathogenic isolates.</title>
        <authorList>
            <person name="Rasko D.A."/>
            <person name="Rosovitz M.J."/>
            <person name="Myers G.S.A."/>
            <person name="Mongodin E.F."/>
            <person name="Fricke W.F."/>
            <person name="Gajer P."/>
            <person name="Crabtree J."/>
            <person name="Sebaihia M."/>
            <person name="Thomson N.R."/>
            <person name="Chaudhuri R."/>
            <person name="Henderson I.R."/>
            <person name="Sperandio V."/>
            <person name="Ravel J."/>
        </authorList>
    </citation>
    <scope>NUCLEOTIDE SEQUENCE [LARGE SCALE GENOMIC DNA]</scope>
    <source>
        <strain>E24377A / ETEC</strain>
    </source>
</reference>
<accession>A7ZQC1</accession>
<feature type="chain" id="PRO_1000061180" description="Glutamate--cysteine ligase">
    <location>
        <begin position="1"/>
        <end position="518"/>
    </location>
</feature>
<protein>
    <recommendedName>
        <fullName evidence="1">Glutamate--cysteine ligase</fullName>
        <ecNumber evidence="1">6.3.2.2</ecNumber>
    </recommendedName>
    <alternativeName>
        <fullName evidence="1">Gamma-ECS</fullName>
        <shortName evidence="1">GCS</shortName>
    </alternativeName>
    <alternativeName>
        <fullName evidence="1">Gamma-glutamylcysteine synthetase</fullName>
    </alternativeName>
</protein>